<evidence type="ECO:0000250" key="1">
    <source>
        <dbReference type="UniProtKB" id="F4K6F1"/>
    </source>
</evidence>
<evidence type="ECO:0000250" key="2">
    <source>
        <dbReference type="UniProtKB" id="Q7XJ98"/>
    </source>
</evidence>
<evidence type="ECO:0000255" key="3"/>
<evidence type="ECO:0000255" key="4">
    <source>
        <dbReference type="PROSITE-ProRule" id="PRU00498"/>
    </source>
</evidence>
<evidence type="ECO:0000256" key="5">
    <source>
        <dbReference type="SAM" id="MobiDB-lite"/>
    </source>
</evidence>
<evidence type="ECO:0000269" key="6">
    <source>
    </source>
</evidence>
<evidence type="ECO:0000303" key="7">
    <source>
    </source>
</evidence>
<evidence type="ECO:0000305" key="8"/>
<evidence type="ECO:0000312" key="9">
    <source>
        <dbReference type="Araport" id="AT4G13990"/>
    </source>
</evidence>
<evidence type="ECO:0000312" key="10">
    <source>
        <dbReference type="EMBL" id="CAB10178.1"/>
    </source>
</evidence>
<feature type="chain" id="PRO_0000435996" description="Probable xyloglucan galactosyltransferase GT14">
    <location>
        <begin position="1"/>
        <end position="521"/>
    </location>
</feature>
<feature type="topological domain" description="Cytoplasmic" evidence="8">
    <location>
        <begin position="1"/>
        <end position="30"/>
    </location>
</feature>
<feature type="transmembrane region" description="Helical; Signal-anchor for type II membrane protein" evidence="3">
    <location>
        <begin position="31"/>
        <end position="51"/>
    </location>
</feature>
<feature type="topological domain" description="Lumenal" evidence="8">
    <location>
        <begin position="52"/>
        <end position="521"/>
    </location>
</feature>
<feature type="region of interest" description="Disordered" evidence="5">
    <location>
        <begin position="72"/>
        <end position="92"/>
    </location>
</feature>
<feature type="region of interest" description="Disordered" evidence="5">
    <location>
        <begin position="492"/>
        <end position="521"/>
    </location>
</feature>
<feature type="compositionally biased region" description="Basic and acidic residues" evidence="5">
    <location>
        <begin position="76"/>
        <end position="87"/>
    </location>
</feature>
<feature type="glycosylation site" description="N-linked (GlcNAc...) asparagine" evidence="4">
    <location>
        <position position="81"/>
    </location>
</feature>
<feature type="glycosylation site" description="N-linked (GlcNAc...) asparagine" evidence="4">
    <location>
        <position position="177"/>
    </location>
</feature>
<feature type="glycosylation site" description="N-linked (GlcNAc...) asparagine" evidence="4">
    <location>
        <position position="203"/>
    </location>
</feature>
<feature type="glycosylation site" description="N-linked (GlcNAc...) asparagine" evidence="4">
    <location>
        <position position="249"/>
    </location>
</feature>
<feature type="glycosylation site" description="N-linked (GlcNAc...) asparagine" evidence="4">
    <location>
        <position position="265"/>
    </location>
</feature>
<feature type="glycosylation site" description="N-linked (GlcNAc...) asparagine" evidence="4">
    <location>
        <position position="411"/>
    </location>
</feature>
<proteinExistence type="evidence at transcript level"/>
<keyword id="KW-0325">Glycoprotein</keyword>
<keyword id="KW-0328">Glycosyltransferase</keyword>
<keyword id="KW-0333">Golgi apparatus</keyword>
<keyword id="KW-0472">Membrane</keyword>
<keyword id="KW-1185">Reference proteome</keyword>
<keyword id="KW-0735">Signal-anchor</keyword>
<keyword id="KW-0808">Transferase</keyword>
<keyword id="KW-0812">Transmembrane</keyword>
<keyword id="KW-1133">Transmembrane helix</keyword>
<sequence>MRPKNYSQMEKPISITTGKFRTNNNNNHNNVWFVVPLFFILCFVLLCFDYSALFTDTDETAFSIPDVTQKSTSSEFTKDDNFSRFPDDPSPDSSCSGRYIYVHELPYRFNGDLLDNCFKITRGTEKDICPYIENYGFGPVIKNYENVLLKQSWFTTNQFMLEVIFHNKMINYRCLTNDSSLASAVFVPFYAGLDMSRYLWGFNITVRDSSSHELMDWLVVQKEWGRMSGRDHFLVSGRIAWDFRRQTDNESDWGSKLRFLPESRNMSMLSIESSSWKNDYAIPYPTCFHPRSVDEIVEWQELMRSRKREYLFTFAGAPRPEYKDSVRGKIIDECLESKKQCYLLDCNYGNVNCDNPVNVMKVFRNSVFCLQPPGDSYTRRSMFDSILAGCIPVFFHPGTAYAQYKWHLPKNHSSYSVYLPVKDVKEWNIKIKERLIEIPEERVVRLREEVIRLIPKVVYADPKYGSDGSEDAFELAVKGMLERIEEVREMMRQGKDGSDGFDDRDDYKYTFSPYEEPQVLA</sequence>
<dbReference type="EC" id="2.4.1.-" evidence="8"/>
<dbReference type="EMBL" id="KJ138760">
    <property type="protein sequence ID" value="AHL38700.1"/>
    <property type="molecule type" value="mRNA"/>
</dbReference>
<dbReference type="EMBL" id="Z97335">
    <property type="protein sequence ID" value="CAB10178.1"/>
    <property type="status" value="ALT_SEQ"/>
    <property type="molecule type" value="Genomic_DNA"/>
</dbReference>
<dbReference type="EMBL" id="AL161537">
    <property type="protein sequence ID" value="CAB78441.1"/>
    <property type="status" value="ALT_SEQ"/>
    <property type="molecule type" value="Genomic_DNA"/>
</dbReference>
<dbReference type="EMBL" id="CP002687">
    <property type="protein sequence ID" value="AEE83357.1"/>
    <property type="molecule type" value="Genomic_DNA"/>
</dbReference>
<dbReference type="EMBL" id="CP002687">
    <property type="protein sequence ID" value="ANM67227.1"/>
    <property type="molecule type" value="Genomic_DNA"/>
</dbReference>
<dbReference type="EMBL" id="BT006172">
    <property type="protein sequence ID" value="AAP04155.1"/>
    <property type="molecule type" value="mRNA"/>
</dbReference>
<dbReference type="PIR" id="H71400">
    <property type="entry name" value="H71400"/>
</dbReference>
<dbReference type="RefSeq" id="NP_001319928.1">
    <property type="nucleotide sequence ID" value="NM_001340898.1"/>
</dbReference>
<dbReference type="RefSeq" id="NP_193135.2">
    <property type="nucleotide sequence ID" value="NM_117474.3"/>
</dbReference>
<dbReference type="FunCoup" id="Q84R16">
    <property type="interactions" value="1"/>
</dbReference>
<dbReference type="STRING" id="3702.Q84R16"/>
<dbReference type="CAZy" id="GT47">
    <property type="family name" value="Glycosyltransferase Family 47"/>
</dbReference>
<dbReference type="GlyCosmos" id="Q84R16">
    <property type="glycosylation" value="6 sites, No reported glycans"/>
</dbReference>
<dbReference type="GlyGen" id="Q84R16">
    <property type="glycosylation" value="6 sites"/>
</dbReference>
<dbReference type="PaxDb" id="3702-AT4G13990.1"/>
<dbReference type="ProteomicsDB" id="247300"/>
<dbReference type="EnsemblPlants" id="AT4G13990.1">
    <property type="protein sequence ID" value="AT4G13990.1"/>
    <property type="gene ID" value="AT4G13990"/>
</dbReference>
<dbReference type="EnsemblPlants" id="AT4G13990.2">
    <property type="protein sequence ID" value="AT4G13990.2"/>
    <property type="gene ID" value="AT4G13990"/>
</dbReference>
<dbReference type="GeneID" id="827035"/>
<dbReference type="Gramene" id="AT4G13990.1">
    <property type="protein sequence ID" value="AT4G13990.1"/>
    <property type="gene ID" value="AT4G13990"/>
</dbReference>
<dbReference type="Gramene" id="AT4G13990.2">
    <property type="protein sequence ID" value="AT4G13990.2"/>
    <property type="gene ID" value="AT4G13990"/>
</dbReference>
<dbReference type="KEGG" id="ath:AT4G13990"/>
<dbReference type="Araport" id="AT4G13990"/>
<dbReference type="TAIR" id="AT4G13990"/>
<dbReference type="eggNOG" id="KOG1021">
    <property type="taxonomic scope" value="Eukaryota"/>
</dbReference>
<dbReference type="HOGENOM" id="CLU_012659_2_1_1"/>
<dbReference type="InParanoid" id="Q84R16"/>
<dbReference type="OMA" id="EWDIKIK"/>
<dbReference type="PhylomeDB" id="Q84R16"/>
<dbReference type="PRO" id="PR:Q84R16"/>
<dbReference type="Proteomes" id="UP000006548">
    <property type="component" value="Chromosome 4"/>
</dbReference>
<dbReference type="ExpressionAtlas" id="Q84R16">
    <property type="expression patterns" value="baseline and differential"/>
</dbReference>
<dbReference type="GO" id="GO:0000139">
    <property type="term" value="C:Golgi membrane"/>
    <property type="evidence" value="ECO:0007669"/>
    <property type="project" value="UniProtKB-SubCell"/>
</dbReference>
<dbReference type="GO" id="GO:0016020">
    <property type="term" value="C:membrane"/>
    <property type="evidence" value="ECO:0007005"/>
    <property type="project" value="TAIR"/>
</dbReference>
<dbReference type="GO" id="GO:0009505">
    <property type="term" value="C:plant-type cell wall"/>
    <property type="evidence" value="ECO:0007005"/>
    <property type="project" value="TAIR"/>
</dbReference>
<dbReference type="GO" id="GO:0016757">
    <property type="term" value="F:glycosyltransferase activity"/>
    <property type="evidence" value="ECO:0007669"/>
    <property type="project" value="UniProtKB-KW"/>
</dbReference>
<dbReference type="GO" id="GO:0006486">
    <property type="term" value="P:protein glycosylation"/>
    <property type="evidence" value="ECO:0007669"/>
    <property type="project" value="InterPro"/>
</dbReference>
<dbReference type="InterPro" id="IPR004263">
    <property type="entry name" value="Exostosin"/>
</dbReference>
<dbReference type="InterPro" id="IPR040911">
    <property type="entry name" value="Exostosin_GT47"/>
</dbReference>
<dbReference type="PANTHER" id="PTHR11062">
    <property type="entry name" value="EXOSTOSIN HEPARAN SULFATE GLYCOSYLTRANSFERASE -RELATED"/>
    <property type="match status" value="1"/>
</dbReference>
<dbReference type="PANTHER" id="PTHR11062:SF241">
    <property type="entry name" value="XYLOGLUCAN GALACTOSYLTRANSFERASE GT14-RELATED"/>
    <property type="match status" value="1"/>
</dbReference>
<dbReference type="Pfam" id="PF03016">
    <property type="entry name" value="Exostosin_GT47"/>
    <property type="match status" value="1"/>
</dbReference>
<accession>Q84R16</accession>
<accession>O23260</accession>
<name>GT14_ARATH</name>
<protein>
    <recommendedName>
        <fullName evidence="8">Probable xyloglucan galactosyltransferase GT14</fullName>
        <ecNumber evidence="8">2.4.1.-</ecNumber>
    </recommendedName>
    <alternativeName>
        <fullName evidence="7">Glycosyltransferase 14</fullName>
        <shortName evidence="7">AtGT14</shortName>
    </alternativeName>
</protein>
<reference key="1">
    <citation type="journal article" date="2014" name="Plant J.">
        <title>The plant glycosyltransferase clone collection for functional genomics.</title>
        <authorList>
            <person name="Lao J."/>
            <person name="Oikawa A."/>
            <person name="Bromley J.R."/>
            <person name="McInerney P."/>
            <person name="Suttangkakul A."/>
            <person name="Smith-Moritz A.M."/>
            <person name="Plahar H."/>
            <person name="Chiu T.-Y."/>
            <person name="Gonzalez Fernandez-Nino S.M.G."/>
            <person name="Ebert B."/>
            <person name="Yang F."/>
            <person name="Christiansen K.M."/>
            <person name="Hansen S.F."/>
            <person name="Stonebloom S."/>
            <person name="Adams P.D."/>
            <person name="Ronald P.C."/>
            <person name="Hillson N.J."/>
            <person name="Hadi M.Z."/>
            <person name="Vega-Sanchez M.E."/>
            <person name="Loque D."/>
            <person name="Scheller H.V."/>
            <person name="Heazlewood J.L."/>
        </authorList>
    </citation>
    <scope>NUCLEOTIDE SEQUENCE [MRNA]</scope>
    <source>
        <strain>cv. Columbia</strain>
    </source>
</reference>
<reference key="2">
    <citation type="journal article" date="1998" name="Nature">
        <title>Analysis of 1.9 Mb of contiguous sequence from chromosome 4 of Arabidopsis thaliana.</title>
        <authorList>
            <person name="Bevan M."/>
            <person name="Bancroft I."/>
            <person name="Bent E."/>
            <person name="Love K."/>
            <person name="Goodman H.M."/>
            <person name="Dean C."/>
            <person name="Bergkamp R."/>
            <person name="Dirkse W."/>
            <person name="van Staveren M."/>
            <person name="Stiekema W."/>
            <person name="Drost L."/>
            <person name="Ridley P."/>
            <person name="Hudson S.-A."/>
            <person name="Patel K."/>
            <person name="Murphy G."/>
            <person name="Piffanelli P."/>
            <person name="Wedler H."/>
            <person name="Wedler E."/>
            <person name="Wambutt R."/>
            <person name="Weitzenegger T."/>
            <person name="Pohl T."/>
            <person name="Terryn N."/>
            <person name="Gielen J."/>
            <person name="Villarroel R."/>
            <person name="De Clercq R."/>
            <person name="van Montagu M."/>
            <person name="Lecharny A."/>
            <person name="Aubourg S."/>
            <person name="Gy I."/>
            <person name="Kreis M."/>
            <person name="Lao N."/>
            <person name="Kavanagh T."/>
            <person name="Hempel S."/>
            <person name="Kotter P."/>
            <person name="Entian K.-D."/>
            <person name="Rieger M."/>
            <person name="Schaefer M."/>
            <person name="Funk B."/>
            <person name="Mueller-Auer S."/>
            <person name="Silvey M."/>
            <person name="James R."/>
            <person name="Monfort A."/>
            <person name="Pons A."/>
            <person name="Puigdomenech P."/>
            <person name="Douka A."/>
            <person name="Voukelatou E."/>
            <person name="Milioni D."/>
            <person name="Hatzopoulos P."/>
            <person name="Piravandi E."/>
            <person name="Obermaier B."/>
            <person name="Hilbert H."/>
            <person name="Duesterhoeft A."/>
            <person name="Moores T."/>
            <person name="Jones J.D.G."/>
            <person name="Eneva T."/>
            <person name="Palme K."/>
            <person name="Benes V."/>
            <person name="Rechmann S."/>
            <person name="Ansorge W."/>
            <person name="Cooke R."/>
            <person name="Berger C."/>
            <person name="Delseny M."/>
            <person name="Voet M."/>
            <person name="Volckaert G."/>
            <person name="Mewes H.-W."/>
            <person name="Klosterman S."/>
            <person name="Schueller C."/>
            <person name="Chalwatzis N."/>
        </authorList>
    </citation>
    <scope>NUCLEOTIDE SEQUENCE [LARGE SCALE GENOMIC DNA]</scope>
    <source>
        <strain>cv. Columbia</strain>
    </source>
</reference>
<reference key="3">
    <citation type="journal article" date="1999" name="Nature">
        <title>Sequence and analysis of chromosome 4 of the plant Arabidopsis thaliana.</title>
        <authorList>
            <person name="Mayer K.F.X."/>
            <person name="Schueller C."/>
            <person name="Wambutt R."/>
            <person name="Murphy G."/>
            <person name="Volckaert G."/>
            <person name="Pohl T."/>
            <person name="Duesterhoeft A."/>
            <person name="Stiekema W."/>
            <person name="Entian K.-D."/>
            <person name="Terryn N."/>
            <person name="Harris B."/>
            <person name="Ansorge W."/>
            <person name="Brandt P."/>
            <person name="Grivell L.A."/>
            <person name="Rieger M."/>
            <person name="Weichselgartner M."/>
            <person name="de Simone V."/>
            <person name="Obermaier B."/>
            <person name="Mache R."/>
            <person name="Mueller M."/>
            <person name="Kreis M."/>
            <person name="Delseny M."/>
            <person name="Puigdomenech P."/>
            <person name="Watson M."/>
            <person name="Schmidtheini T."/>
            <person name="Reichert B."/>
            <person name="Portetelle D."/>
            <person name="Perez-Alonso M."/>
            <person name="Boutry M."/>
            <person name="Bancroft I."/>
            <person name="Vos P."/>
            <person name="Hoheisel J."/>
            <person name="Zimmermann W."/>
            <person name="Wedler H."/>
            <person name="Ridley P."/>
            <person name="Langham S.-A."/>
            <person name="McCullagh B."/>
            <person name="Bilham L."/>
            <person name="Robben J."/>
            <person name="van der Schueren J."/>
            <person name="Grymonprez B."/>
            <person name="Chuang Y.-J."/>
            <person name="Vandenbussche F."/>
            <person name="Braeken M."/>
            <person name="Weltjens I."/>
            <person name="Voet M."/>
            <person name="Bastiaens I."/>
            <person name="Aert R."/>
            <person name="Defoor E."/>
            <person name="Weitzenegger T."/>
            <person name="Bothe G."/>
            <person name="Ramsperger U."/>
            <person name="Hilbert H."/>
            <person name="Braun M."/>
            <person name="Holzer E."/>
            <person name="Brandt A."/>
            <person name="Peters S."/>
            <person name="van Staveren M."/>
            <person name="Dirkse W."/>
            <person name="Mooijman P."/>
            <person name="Klein Lankhorst R."/>
            <person name="Rose M."/>
            <person name="Hauf J."/>
            <person name="Koetter P."/>
            <person name="Berneiser S."/>
            <person name="Hempel S."/>
            <person name="Feldpausch M."/>
            <person name="Lamberth S."/>
            <person name="Van den Daele H."/>
            <person name="De Keyser A."/>
            <person name="Buysshaert C."/>
            <person name="Gielen J."/>
            <person name="Villarroel R."/>
            <person name="De Clercq R."/>
            <person name="van Montagu M."/>
            <person name="Rogers J."/>
            <person name="Cronin A."/>
            <person name="Quail M.A."/>
            <person name="Bray-Allen S."/>
            <person name="Clark L."/>
            <person name="Doggett J."/>
            <person name="Hall S."/>
            <person name="Kay M."/>
            <person name="Lennard N."/>
            <person name="McLay K."/>
            <person name="Mayes R."/>
            <person name="Pettett A."/>
            <person name="Rajandream M.A."/>
            <person name="Lyne M."/>
            <person name="Benes V."/>
            <person name="Rechmann S."/>
            <person name="Borkova D."/>
            <person name="Bloecker H."/>
            <person name="Scharfe M."/>
            <person name="Grimm M."/>
            <person name="Loehnert T.-H."/>
            <person name="Dose S."/>
            <person name="de Haan M."/>
            <person name="Maarse A.C."/>
            <person name="Schaefer M."/>
            <person name="Mueller-Auer S."/>
            <person name="Gabel C."/>
            <person name="Fuchs M."/>
            <person name="Fartmann B."/>
            <person name="Granderath K."/>
            <person name="Dauner D."/>
            <person name="Herzl A."/>
            <person name="Neumann S."/>
            <person name="Argiriou A."/>
            <person name="Vitale D."/>
            <person name="Liguori R."/>
            <person name="Piravandi E."/>
            <person name="Massenet O."/>
            <person name="Quigley F."/>
            <person name="Clabauld G."/>
            <person name="Muendlein A."/>
            <person name="Felber R."/>
            <person name="Schnabl S."/>
            <person name="Hiller R."/>
            <person name="Schmidt W."/>
            <person name="Lecharny A."/>
            <person name="Aubourg S."/>
            <person name="Chefdor F."/>
            <person name="Cooke R."/>
            <person name="Berger C."/>
            <person name="Monfort A."/>
            <person name="Casacuberta E."/>
            <person name="Gibbons T."/>
            <person name="Weber N."/>
            <person name="Vandenbol M."/>
            <person name="Bargues M."/>
            <person name="Terol J."/>
            <person name="Torres A."/>
            <person name="Perez-Perez A."/>
            <person name="Purnelle B."/>
            <person name="Bent E."/>
            <person name="Johnson S."/>
            <person name="Tacon D."/>
            <person name="Jesse T."/>
            <person name="Heijnen L."/>
            <person name="Schwarz S."/>
            <person name="Scholler P."/>
            <person name="Heber S."/>
            <person name="Francs P."/>
            <person name="Bielke C."/>
            <person name="Frishman D."/>
            <person name="Haase D."/>
            <person name="Lemcke K."/>
            <person name="Mewes H.-W."/>
            <person name="Stocker S."/>
            <person name="Zaccaria P."/>
            <person name="Bevan M."/>
            <person name="Wilson R.K."/>
            <person name="de la Bastide M."/>
            <person name="Habermann K."/>
            <person name="Parnell L."/>
            <person name="Dedhia N."/>
            <person name="Gnoj L."/>
            <person name="Schutz K."/>
            <person name="Huang E."/>
            <person name="Spiegel L."/>
            <person name="Sekhon M."/>
            <person name="Murray J."/>
            <person name="Sheet P."/>
            <person name="Cordes M."/>
            <person name="Abu-Threideh J."/>
            <person name="Stoneking T."/>
            <person name="Kalicki J."/>
            <person name="Graves T."/>
            <person name="Harmon G."/>
            <person name="Edwards J."/>
            <person name="Latreille P."/>
            <person name="Courtney L."/>
            <person name="Cloud J."/>
            <person name="Abbott A."/>
            <person name="Scott K."/>
            <person name="Johnson D."/>
            <person name="Minx P."/>
            <person name="Bentley D."/>
            <person name="Fulton B."/>
            <person name="Miller N."/>
            <person name="Greco T."/>
            <person name="Kemp K."/>
            <person name="Kramer J."/>
            <person name="Fulton L."/>
            <person name="Mardis E."/>
            <person name="Dante M."/>
            <person name="Pepin K."/>
            <person name="Hillier L.W."/>
            <person name="Nelson J."/>
            <person name="Spieth J."/>
            <person name="Ryan E."/>
            <person name="Andrews S."/>
            <person name="Geisel C."/>
            <person name="Layman D."/>
            <person name="Du H."/>
            <person name="Ali J."/>
            <person name="Berghoff A."/>
            <person name="Jones K."/>
            <person name="Drone K."/>
            <person name="Cotton M."/>
            <person name="Joshu C."/>
            <person name="Antonoiu B."/>
            <person name="Zidanic M."/>
            <person name="Strong C."/>
            <person name="Sun H."/>
            <person name="Lamar B."/>
            <person name="Yordan C."/>
            <person name="Ma P."/>
            <person name="Zhong J."/>
            <person name="Preston R."/>
            <person name="Vil D."/>
            <person name="Shekher M."/>
            <person name="Matero A."/>
            <person name="Shah R."/>
            <person name="Swaby I.K."/>
            <person name="O'Shaughnessy A."/>
            <person name="Rodriguez M."/>
            <person name="Hoffman J."/>
            <person name="Till S."/>
            <person name="Granat S."/>
            <person name="Shohdy N."/>
            <person name="Hasegawa A."/>
            <person name="Hameed A."/>
            <person name="Lodhi M."/>
            <person name="Johnson A."/>
            <person name="Chen E."/>
            <person name="Marra M.A."/>
            <person name="Martienssen R."/>
            <person name="McCombie W.R."/>
        </authorList>
    </citation>
    <scope>NUCLEOTIDE SEQUENCE [LARGE SCALE GENOMIC DNA]</scope>
    <source>
        <strain>cv. Columbia</strain>
    </source>
</reference>
<reference key="4">
    <citation type="journal article" date="2017" name="Plant J.">
        <title>Araport11: a complete reannotation of the Arabidopsis thaliana reference genome.</title>
        <authorList>
            <person name="Cheng C.Y."/>
            <person name="Krishnakumar V."/>
            <person name="Chan A.P."/>
            <person name="Thibaud-Nissen F."/>
            <person name="Schobel S."/>
            <person name="Town C.D."/>
        </authorList>
    </citation>
    <scope>GENOME REANNOTATION</scope>
    <source>
        <strain>cv. Columbia</strain>
    </source>
</reference>
<reference key="5">
    <citation type="journal article" date="2003" name="Science">
        <title>Empirical analysis of transcriptional activity in the Arabidopsis genome.</title>
        <authorList>
            <person name="Yamada K."/>
            <person name="Lim J."/>
            <person name="Dale J.M."/>
            <person name="Chen H."/>
            <person name="Shinn P."/>
            <person name="Palm C.J."/>
            <person name="Southwick A.M."/>
            <person name="Wu H.C."/>
            <person name="Kim C.J."/>
            <person name="Nguyen M."/>
            <person name="Pham P.K."/>
            <person name="Cheuk R.F."/>
            <person name="Karlin-Newmann G."/>
            <person name="Liu S.X."/>
            <person name="Lam B."/>
            <person name="Sakano H."/>
            <person name="Wu T."/>
            <person name="Yu G."/>
            <person name="Miranda M."/>
            <person name="Quach H.L."/>
            <person name="Tripp M."/>
            <person name="Chang C.H."/>
            <person name="Lee J.M."/>
            <person name="Toriumi M.J."/>
            <person name="Chan M.M."/>
            <person name="Tang C.C."/>
            <person name="Onodera C.S."/>
            <person name="Deng J.M."/>
            <person name="Akiyama K."/>
            <person name="Ansari Y."/>
            <person name="Arakawa T."/>
            <person name="Banh J."/>
            <person name="Banno F."/>
            <person name="Bowser L."/>
            <person name="Brooks S.Y."/>
            <person name="Carninci P."/>
            <person name="Chao Q."/>
            <person name="Choy N."/>
            <person name="Enju A."/>
            <person name="Goldsmith A.D."/>
            <person name="Gurjal M."/>
            <person name="Hansen N.F."/>
            <person name="Hayashizaki Y."/>
            <person name="Johnson-Hopson C."/>
            <person name="Hsuan V.W."/>
            <person name="Iida K."/>
            <person name="Karnes M."/>
            <person name="Khan S."/>
            <person name="Koesema E."/>
            <person name="Ishida J."/>
            <person name="Jiang P.X."/>
            <person name="Jones T."/>
            <person name="Kawai J."/>
            <person name="Kamiya A."/>
            <person name="Meyers C."/>
            <person name="Nakajima M."/>
            <person name="Narusaka M."/>
            <person name="Seki M."/>
            <person name="Sakurai T."/>
            <person name="Satou M."/>
            <person name="Tamse R."/>
            <person name="Vaysberg M."/>
            <person name="Wallender E.K."/>
            <person name="Wong C."/>
            <person name="Yamamura Y."/>
            <person name="Yuan S."/>
            <person name="Shinozaki K."/>
            <person name="Davis R.W."/>
            <person name="Theologis A."/>
            <person name="Ecker J.R."/>
        </authorList>
    </citation>
    <scope>NUCLEOTIDE SEQUENCE [LARGE SCALE MRNA]</scope>
    <source>
        <strain>cv. Columbia</strain>
    </source>
</reference>
<reference key="6">
    <citation type="journal article" date="2004" name="Plant Physiol.">
        <title>Molecular analysis of 10 coding regions from Arabidopsis that are homologous to the MUR3 xyloglucan galactosyltransferase.</title>
        <authorList>
            <person name="Li X."/>
            <person name="Cordero I."/>
            <person name="Caplan J."/>
            <person name="Moelhoej M."/>
            <person name="Reiter W.D."/>
        </authorList>
    </citation>
    <scope>TISSUE SPECIFICITY</scope>
</reference>
<organism>
    <name type="scientific">Arabidopsis thaliana</name>
    <name type="common">Mouse-ear cress</name>
    <dbReference type="NCBI Taxonomy" id="3702"/>
    <lineage>
        <taxon>Eukaryota</taxon>
        <taxon>Viridiplantae</taxon>
        <taxon>Streptophyta</taxon>
        <taxon>Embryophyta</taxon>
        <taxon>Tracheophyta</taxon>
        <taxon>Spermatophyta</taxon>
        <taxon>Magnoliopsida</taxon>
        <taxon>eudicotyledons</taxon>
        <taxon>Gunneridae</taxon>
        <taxon>Pentapetalae</taxon>
        <taxon>rosids</taxon>
        <taxon>malvids</taxon>
        <taxon>Brassicales</taxon>
        <taxon>Brassicaceae</taxon>
        <taxon>Camelineae</taxon>
        <taxon>Arabidopsis</taxon>
    </lineage>
</organism>
<comment type="function">
    <text evidence="1">Functions in xyloglucan synthesis by adding side chains to the xylosylated glucan backbone. Involved in the galactosylation of hemicellulose xyloglucan.</text>
</comment>
<comment type="subcellular location">
    <subcellularLocation>
        <location evidence="2">Golgi apparatus membrane</location>
        <topology evidence="2">Single-pass type II membrane protein</topology>
    </subcellularLocation>
</comment>
<comment type="tissue specificity">
    <text evidence="6">Expressed in roots, hypocotyls, cotyledons, leaves, stems, stamens and carpels.</text>
</comment>
<comment type="similarity">
    <text evidence="8">Belongs to the glycosyltransferase 47 family.</text>
</comment>
<comment type="sequence caution" evidence="8">
    <conflict type="erroneous gene model prediction">
        <sequence resource="EMBL-CDS" id="CAB10178"/>
    </conflict>
</comment>
<comment type="sequence caution" evidence="8">
    <conflict type="erroneous gene model prediction">
        <sequence resource="EMBL-CDS" id="CAB78441"/>
    </conflict>
</comment>
<gene>
    <name evidence="7" type="primary">GT14</name>
    <name evidence="9" type="ordered locus">At4g13990</name>
    <name evidence="10" type="ORF">dl3035w</name>
</gene>